<comment type="function">
    <text evidence="1">Catalyzes the transfer of an acyl group from acyl-phosphate (acyl-PO(4)) to glycerol-3-phosphate (G3P) to form lysophosphatidic acid (LPA). This enzyme utilizes acyl-phosphate as fatty acyl donor, but not acyl-CoA or acyl-ACP.</text>
</comment>
<comment type="catalytic activity">
    <reaction evidence="1">
        <text>an acyl phosphate + sn-glycerol 3-phosphate = a 1-acyl-sn-glycero-3-phosphate + phosphate</text>
        <dbReference type="Rhea" id="RHEA:34075"/>
        <dbReference type="ChEBI" id="CHEBI:43474"/>
        <dbReference type="ChEBI" id="CHEBI:57597"/>
        <dbReference type="ChEBI" id="CHEBI:57970"/>
        <dbReference type="ChEBI" id="CHEBI:59918"/>
        <dbReference type="EC" id="2.3.1.275"/>
    </reaction>
</comment>
<comment type="pathway">
    <text evidence="1">Lipid metabolism; phospholipid metabolism.</text>
</comment>
<comment type="subunit">
    <text evidence="1">Probably interacts with PlsX.</text>
</comment>
<comment type="subcellular location">
    <subcellularLocation>
        <location evidence="1">Cell inner membrane</location>
        <topology evidence="1">Multi-pass membrane protein</topology>
    </subcellularLocation>
</comment>
<comment type="similarity">
    <text evidence="1">Belongs to the PlsY family.</text>
</comment>
<evidence type="ECO:0000255" key="1">
    <source>
        <dbReference type="HAMAP-Rule" id="MF_01043"/>
    </source>
</evidence>
<sequence length="212" mass="22090">MILTEPSPLFAALLIVLAYLIGCVPFAVVVSKLMGLKDPRSYGSKNPGATNVLRTGNKTAAALTLLGDAAKGWFALWLALKLAPGLSSLGYGLVLIAVFLGHLYPVSLGFKGGKGVATALGVLFAVSPWLALATVATWLLVAVVTRYSSLAALVAAFLAPVYYFFGGGTIWPLNAPTAAALVGVSALLFYRHSANIDRLIKGKESRIGSKKA</sequence>
<accession>Q2L004</accession>
<protein>
    <recommendedName>
        <fullName evidence="1">Glycerol-3-phosphate acyltransferase</fullName>
    </recommendedName>
    <alternativeName>
        <fullName evidence="1">Acyl-PO4 G3P acyltransferase</fullName>
    </alternativeName>
    <alternativeName>
        <fullName evidence="1">Acyl-phosphate--glycerol-3-phosphate acyltransferase</fullName>
    </alternativeName>
    <alternativeName>
        <fullName evidence="1">G3P acyltransferase</fullName>
        <shortName evidence="1">GPAT</shortName>
        <ecNumber evidence="1">2.3.1.275</ecNumber>
    </alternativeName>
    <alternativeName>
        <fullName evidence="1">Lysophosphatidic acid synthase</fullName>
        <shortName evidence="1">LPA synthase</shortName>
    </alternativeName>
</protein>
<dbReference type="EC" id="2.3.1.275" evidence="1"/>
<dbReference type="EMBL" id="AM167904">
    <property type="protein sequence ID" value="CAJ49591.1"/>
    <property type="molecule type" value="Genomic_DNA"/>
</dbReference>
<dbReference type="RefSeq" id="WP_012417648.1">
    <property type="nucleotide sequence ID" value="NC_010645.1"/>
</dbReference>
<dbReference type="SMR" id="Q2L004"/>
<dbReference type="STRING" id="360910.BAV1982"/>
<dbReference type="GeneID" id="92934956"/>
<dbReference type="KEGG" id="bav:BAV1982"/>
<dbReference type="eggNOG" id="COG0344">
    <property type="taxonomic scope" value="Bacteria"/>
</dbReference>
<dbReference type="HOGENOM" id="CLU_081254_0_0_4"/>
<dbReference type="OrthoDB" id="9777124at2"/>
<dbReference type="UniPathway" id="UPA00085"/>
<dbReference type="Proteomes" id="UP000001977">
    <property type="component" value="Chromosome"/>
</dbReference>
<dbReference type="GO" id="GO:0005886">
    <property type="term" value="C:plasma membrane"/>
    <property type="evidence" value="ECO:0007669"/>
    <property type="project" value="UniProtKB-SubCell"/>
</dbReference>
<dbReference type="GO" id="GO:0043772">
    <property type="term" value="F:acyl-phosphate glycerol-3-phosphate acyltransferase activity"/>
    <property type="evidence" value="ECO:0007669"/>
    <property type="project" value="UniProtKB-UniRule"/>
</dbReference>
<dbReference type="GO" id="GO:0008654">
    <property type="term" value="P:phospholipid biosynthetic process"/>
    <property type="evidence" value="ECO:0007669"/>
    <property type="project" value="UniProtKB-UniRule"/>
</dbReference>
<dbReference type="HAMAP" id="MF_01043">
    <property type="entry name" value="PlsY"/>
    <property type="match status" value="1"/>
</dbReference>
<dbReference type="InterPro" id="IPR003811">
    <property type="entry name" value="G3P_acylTferase_PlsY"/>
</dbReference>
<dbReference type="NCBIfam" id="TIGR00023">
    <property type="entry name" value="glycerol-3-phosphate 1-O-acyltransferase PlsY"/>
    <property type="match status" value="1"/>
</dbReference>
<dbReference type="PANTHER" id="PTHR30309:SF0">
    <property type="entry name" value="GLYCEROL-3-PHOSPHATE ACYLTRANSFERASE-RELATED"/>
    <property type="match status" value="1"/>
</dbReference>
<dbReference type="PANTHER" id="PTHR30309">
    <property type="entry name" value="INNER MEMBRANE PROTEIN YGIH"/>
    <property type="match status" value="1"/>
</dbReference>
<dbReference type="Pfam" id="PF02660">
    <property type="entry name" value="G3P_acyltransf"/>
    <property type="match status" value="1"/>
</dbReference>
<dbReference type="SMART" id="SM01207">
    <property type="entry name" value="G3P_acyltransf"/>
    <property type="match status" value="1"/>
</dbReference>
<keyword id="KW-0997">Cell inner membrane</keyword>
<keyword id="KW-1003">Cell membrane</keyword>
<keyword id="KW-0444">Lipid biosynthesis</keyword>
<keyword id="KW-0443">Lipid metabolism</keyword>
<keyword id="KW-0472">Membrane</keyword>
<keyword id="KW-0594">Phospholipid biosynthesis</keyword>
<keyword id="KW-1208">Phospholipid metabolism</keyword>
<keyword id="KW-1185">Reference proteome</keyword>
<keyword id="KW-0808">Transferase</keyword>
<keyword id="KW-0812">Transmembrane</keyword>
<keyword id="KW-1133">Transmembrane helix</keyword>
<feature type="chain" id="PRO_0000250285" description="Glycerol-3-phosphate acyltransferase">
    <location>
        <begin position="1"/>
        <end position="212"/>
    </location>
</feature>
<feature type="transmembrane region" description="Helical" evidence="1">
    <location>
        <begin position="10"/>
        <end position="30"/>
    </location>
</feature>
<feature type="transmembrane region" description="Helical" evidence="1">
    <location>
        <begin position="90"/>
        <end position="110"/>
    </location>
</feature>
<feature type="transmembrane region" description="Helical" evidence="1">
    <location>
        <begin position="124"/>
        <end position="144"/>
    </location>
</feature>
<feature type="transmembrane region" description="Helical" evidence="1">
    <location>
        <begin position="150"/>
        <end position="170"/>
    </location>
</feature>
<feature type="transmembrane region" description="Helical" evidence="1">
    <location>
        <begin position="171"/>
        <end position="191"/>
    </location>
</feature>
<proteinExistence type="inferred from homology"/>
<name>PLSY_BORA1</name>
<organism>
    <name type="scientific">Bordetella avium (strain 197N)</name>
    <dbReference type="NCBI Taxonomy" id="360910"/>
    <lineage>
        <taxon>Bacteria</taxon>
        <taxon>Pseudomonadati</taxon>
        <taxon>Pseudomonadota</taxon>
        <taxon>Betaproteobacteria</taxon>
        <taxon>Burkholderiales</taxon>
        <taxon>Alcaligenaceae</taxon>
        <taxon>Bordetella</taxon>
    </lineage>
</organism>
<gene>
    <name evidence="1" type="primary">plsY</name>
    <name type="ordered locus">BAV1982</name>
</gene>
<reference key="1">
    <citation type="journal article" date="2006" name="J. Bacteriol.">
        <title>Comparison of the genome sequence of the poultry pathogen Bordetella avium with those of B. bronchiseptica, B. pertussis, and B. parapertussis reveals extensive diversity in surface structures associated with host interaction.</title>
        <authorList>
            <person name="Sebaihia M."/>
            <person name="Preston A."/>
            <person name="Maskell D.J."/>
            <person name="Kuzmiak H."/>
            <person name="Connell T.D."/>
            <person name="King N.D."/>
            <person name="Orndorff P.E."/>
            <person name="Miyamoto D.M."/>
            <person name="Thomson N.R."/>
            <person name="Harris D."/>
            <person name="Goble A."/>
            <person name="Lord A."/>
            <person name="Murphy L."/>
            <person name="Quail M.A."/>
            <person name="Rutter S."/>
            <person name="Squares R."/>
            <person name="Squares S."/>
            <person name="Woodward J."/>
            <person name="Parkhill J."/>
            <person name="Temple L.M."/>
        </authorList>
    </citation>
    <scope>NUCLEOTIDE SEQUENCE [LARGE SCALE GENOMIC DNA]</scope>
    <source>
        <strain>197N</strain>
    </source>
</reference>